<dbReference type="EC" id="6.1.1.9" evidence="1"/>
<dbReference type="EMBL" id="BA000021">
    <property type="protein sequence ID" value="BAC24606.1"/>
    <property type="molecule type" value="Genomic_DNA"/>
</dbReference>
<dbReference type="SMR" id="Q8D294"/>
<dbReference type="STRING" id="36870.gene:10368963"/>
<dbReference type="KEGG" id="wbr:valS"/>
<dbReference type="eggNOG" id="COG0525">
    <property type="taxonomic scope" value="Bacteria"/>
</dbReference>
<dbReference type="HOGENOM" id="CLU_001493_0_2_6"/>
<dbReference type="OrthoDB" id="9810365at2"/>
<dbReference type="Proteomes" id="UP000000562">
    <property type="component" value="Chromosome"/>
</dbReference>
<dbReference type="GO" id="GO:0005829">
    <property type="term" value="C:cytosol"/>
    <property type="evidence" value="ECO:0007669"/>
    <property type="project" value="TreeGrafter"/>
</dbReference>
<dbReference type="GO" id="GO:0002161">
    <property type="term" value="F:aminoacyl-tRNA deacylase activity"/>
    <property type="evidence" value="ECO:0007669"/>
    <property type="project" value="InterPro"/>
</dbReference>
<dbReference type="GO" id="GO:0005524">
    <property type="term" value="F:ATP binding"/>
    <property type="evidence" value="ECO:0007669"/>
    <property type="project" value="UniProtKB-UniRule"/>
</dbReference>
<dbReference type="GO" id="GO:0004832">
    <property type="term" value="F:valine-tRNA ligase activity"/>
    <property type="evidence" value="ECO:0007669"/>
    <property type="project" value="UniProtKB-UniRule"/>
</dbReference>
<dbReference type="GO" id="GO:0006438">
    <property type="term" value="P:valyl-tRNA aminoacylation"/>
    <property type="evidence" value="ECO:0007669"/>
    <property type="project" value="UniProtKB-UniRule"/>
</dbReference>
<dbReference type="CDD" id="cd07962">
    <property type="entry name" value="Anticodon_Ia_Val"/>
    <property type="match status" value="1"/>
</dbReference>
<dbReference type="FunFam" id="3.40.50.620:FF:000020">
    <property type="entry name" value="Valine--tRNA ligase, mitochondrial"/>
    <property type="match status" value="1"/>
</dbReference>
<dbReference type="Gene3D" id="3.40.50.620">
    <property type="entry name" value="HUPs"/>
    <property type="match status" value="2"/>
</dbReference>
<dbReference type="Gene3D" id="1.10.730.10">
    <property type="entry name" value="Isoleucyl-tRNA Synthetase, Domain 1"/>
    <property type="match status" value="1"/>
</dbReference>
<dbReference type="Gene3D" id="3.90.740.10">
    <property type="entry name" value="Valyl/Leucyl/Isoleucyl-tRNA synthetase, editing domain"/>
    <property type="match status" value="1"/>
</dbReference>
<dbReference type="HAMAP" id="MF_02004">
    <property type="entry name" value="Val_tRNA_synth_type1"/>
    <property type="match status" value="1"/>
</dbReference>
<dbReference type="InterPro" id="IPR001412">
    <property type="entry name" value="aa-tRNA-synth_I_CS"/>
</dbReference>
<dbReference type="InterPro" id="IPR002300">
    <property type="entry name" value="aa-tRNA-synth_Ia"/>
</dbReference>
<dbReference type="InterPro" id="IPR033705">
    <property type="entry name" value="Anticodon_Ia_Val"/>
</dbReference>
<dbReference type="InterPro" id="IPR013155">
    <property type="entry name" value="M/V/L/I-tRNA-synth_anticd-bd"/>
</dbReference>
<dbReference type="InterPro" id="IPR014729">
    <property type="entry name" value="Rossmann-like_a/b/a_fold"/>
</dbReference>
<dbReference type="InterPro" id="IPR009080">
    <property type="entry name" value="tRNAsynth_Ia_anticodon-bd"/>
</dbReference>
<dbReference type="InterPro" id="IPR009008">
    <property type="entry name" value="Val/Leu/Ile-tRNA-synth_edit"/>
</dbReference>
<dbReference type="InterPro" id="IPR002303">
    <property type="entry name" value="Valyl-tRNA_ligase"/>
</dbReference>
<dbReference type="NCBIfam" id="NF004349">
    <property type="entry name" value="PRK05729.1"/>
    <property type="match status" value="1"/>
</dbReference>
<dbReference type="NCBIfam" id="TIGR00422">
    <property type="entry name" value="valS"/>
    <property type="match status" value="1"/>
</dbReference>
<dbReference type="PANTHER" id="PTHR11946:SF93">
    <property type="entry name" value="VALINE--TRNA LIGASE, CHLOROPLASTIC_MITOCHONDRIAL 2"/>
    <property type="match status" value="1"/>
</dbReference>
<dbReference type="PANTHER" id="PTHR11946">
    <property type="entry name" value="VALYL-TRNA SYNTHETASES"/>
    <property type="match status" value="1"/>
</dbReference>
<dbReference type="Pfam" id="PF08264">
    <property type="entry name" value="Anticodon_1"/>
    <property type="match status" value="1"/>
</dbReference>
<dbReference type="Pfam" id="PF00133">
    <property type="entry name" value="tRNA-synt_1"/>
    <property type="match status" value="1"/>
</dbReference>
<dbReference type="PRINTS" id="PR00986">
    <property type="entry name" value="TRNASYNTHVAL"/>
</dbReference>
<dbReference type="SUPFAM" id="SSF47323">
    <property type="entry name" value="Anticodon-binding domain of a subclass of class I aminoacyl-tRNA synthetases"/>
    <property type="match status" value="1"/>
</dbReference>
<dbReference type="SUPFAM" id="SSF52374">
    <property type="entry name" value="Nucleotidylyl transferase"/>
    <property type="match status" value="1"/>
</dbReference>
<dbReference type="SUPFAM" id="SSF50677">
    <property type="entry name" value="ValRS/IleRS/LeuRS editing domain"/>
    <property type="match status" value="1"/>
</dbReference>
<dbReference type="PROSITE" id="PS00178">
    <property type="entry name" value="AA_TRNA_LIGASE_I"/>
    <property type="match status" value="1"/>
</dbReference>
<accession>Q8D294</accession>
<feature type="chain" id="PRO_0000224596" description="Valine--tRNA ligase">
    <location>
        <begin position="1"/>
        <end position="881"/>
    </location>
</feature>
<feature type="short sequence motif" description="'HIGH' region">
    <location>
        <begin position="42"/>
        <end position="52"/>
    </location>
</feature>
<feature type="short sequence motif" description="'KMSKS' region">
    <location>
        <begin position="554"/>
        <end position="558"/>
    </location>
</feature>
<feature type="binding site" evidence="1">
    <location>
        <position position="557"/>
    </location>
    <ligand>
        <name>ATP</name>
        <dbReference type="ChEBI" id="CHEBI:30616"/>
    </ligand>
</feature>
<organism>
    <name type="scientific">Wigglesworthia glossinidia brevipalpis</name>
    <dbReference type="NCBI Taxonomy" id="36870"/>
    <lineage>
        <taxon>Bacteria</taxon>
        <taxon>Pseudomonadati</taxon>
        <taxon>Pseudomonadota</taxon>
        <taxon>Gammaproteobacteria</taxon>
        <taxon>Enterobacterales</taxon>
        <taxon>Erwiniaceae</taxon>
        <taxon>Wigglesworthia</taxon>
    </lineage>
</organism>
<reference key="1">
    <citation type="journal article" date="2002" name="Nat. Genet.">
        <title>Genome sequence of the endocellular obligate symbiont of tsetse flies, Wigglesworthia glossinidia.</title>
        <authorList>
            <person name="Akman L."/>
            <person name="Yamashita A."/>
            <person name="Watanabe H."/>
            <person name="Oshima K."/>
            <person name="Shiba T."/>
            <person name="Hattori M."/>
            <person name="Aksoy S."/>
        </authorList>
    </citation>
    <scope>NUCLEOTIDE SEQUENCE [LARGE SCALE GENOMIC DNA]</scope>
</reference>
<name>SYV_WIGBR</name>
<proteinExistence type="inferred from homology"/>
<sequence length="881" mass="104544">MKNPYDSKKIESYFFMFWKKNNLFKKKLNSNKDNFCIILPPPNITGDLHVGHAFQQSIIDIFIRYNYMKGNNVLLQSGIDHAGISTQSILEKKIYFYENKNRFDYGRKNFIKEIWKWKEESEKKICYQINKLGCFTDLNKIRFTMDKDSCKAVNNVFLKLYKDKLIYKKKKLMHWDVKLRTVISDLEIENREINGKLWYIKYFFSENSNKNSKLNFLEIATTRPETIFGDVAVAVNPLDARYNNLIGKYIKVPLTNRSIPIIQDDYVKMDYGSGCVKITPGHDFNDFSICKNHKLNIINILTISGKICKKPKVYDFNGNSVSDTNIKIPKELQGLSISEARNNIVYKLNRKEYITKFEYKKVVLPFGDRSGDILEPMLTNQWYIKTKKLSEVAIEAVKEKKIKFISKQYENMYFGWMENIKDWCISRQLWWGHRIPIWYDVNKNQYPGISESDVRDNFKINKEEILTQEEDVLDTWFSSAIWSFASLGWPQKSIKFDTFHPTNLIISGFDIIYFWISRMIMLTMYIIKDSFGNPQIPFKNIFITGLIRDKNGIKMSKSKGNVIDPIDIIDGISLEDLIKKRTKEISNIKLIKKIEKITKKEFPNGIQNHGADAVRLSMASISCSNRKINIDIKKIIGYKNFCNKLWNVSKFIIINLKNKKVSFEEKEINLHKIDNWILHKYNKVFKYYKYNIDNFRLDLVVNILYEFIWHQFCDWYIENSKIIFKNNIISRLNNTCYTLFFILENSLKMLHPFIPFITEEIWKNLSKMVRNERKNTTILEFFPKKYLFLKKDNSFNEIECIKNIITCIRKLKFEKKTKFNKLVDVCFINNSYEEKIIILNNIEIIKNIAFVKNVDFSRSIPKNVLKKDIKIINNIKIYIYN</sequence>
<gene>
    <name evidence="1" type="primary">valS</name>
    <name type="ordered locus">WIGBR4600</name>
</gene>
<evidence type="ECO:0000255" key="1">
    <source>
        <dbReference type="HAMAP-Rule" id="MF_02004"/>
    </source>
</evidence>
<keyword id="KW-0030">Aminoacyl-tRNA synthetase</keyword>
<keyword id="KW-0067">ATP-binding</keyword>
<keyword id="KW-0963">Cytoplasm</keyword>
<keyword id="KW-0436">Ligase</keyword>
<keyword id="KW-0547">Nucleotide-binding</keyword>
<keyword id="KW-0648">Protein biosynthesis</keyword>
<keyword id="KW-1185">Reference proteome</keyword>
<protein>
    <recommendedName>
        <fullName evidence="1">Valine--tRNA ligase</fullName>
        <ecNumber evidence="1">6.1.1.9</ecNumber>
    </recommendedName>
    <alternativeName>
        <fullName evidence="1">Valyl-tRNA synthetase</fullName>
        <shortName evidence="1">ValRS</shortName>
    </alternativeName>
</protein>
<comment type="function">
    <text evidence="1">Catalyzes the attachment of valine to tRNA(Val). As ValRS can inadvertently accommodate and process structurally similar amino acids such as threonine, to avoid such errors, it has a 'posttransfer' editing activity that hydrolyzes mischarged Thr-tRNA(Val) in a tRNA-dependent manner.</text>
</comment>
<comment type="catalytic activity">
    <reaction evidence="1">
        <text>tRNA(Val) + L-valine + ATP = L-valyl-tRNA(Val) + AMP + diphosphate</text>
        <dbReference type="Rhea" id="RHEA:10704"/>
        <dbReference type="Rhea" id="RHEA-COMP:9672"/>
        <dbReference type="Rhea" id="RHEA-COMP:9708"/>
        <dbReference type="ChEBI" id="CHEBI:30616"/>
        <dbReference type="ChEBI" id="CHEBI:33019"/>
        <dbReference type="ChEBI" id="CHEBI:57762"/>
        <dbReference type="ChEBI" id="CHEBI:78442"/>
        <dbReference type="ChEBI" id="CHEBI:78537"/>
        <dbReference type="ChEBI" id="CHEBI:456215"/>
        <dbReference type="EC" id="6.1.1.9"/>
    </reaction>
</comment>
<comment type="subunit">
    <text evidence="1">Monomer.</text>
</comment>
<comment type="subcellular location">
    <subcellularLocation>
        <location evidence="1">Cytoplasm</location>
    </subcellularLocation>
</comment>
<comment type="domain">
    <text evidence="1">ValRS has two distinct active sites: one for aminoacylation and one for editing. The misactivated threonine is translocated from the active site to the editing site.</text>
</comment>
<comment type="similarity">
    <text evidence="1">Belongs to the class-I aminoacyl-tRNA synthetase family. ValS type 1 subfamily.</text>
</comment>